<reference key="1">
    <citation type="journal article" date="2006" name="J. Bacteriol.">
        <title>The riboflavin transporter RibU in Lactococcus lactis: molecular characterization of gene expression and the transport mechanism.</title>
        <authorList>
            <person name="Burgess C.M."/>
            <person name="Slotboom D.J."/>
            <person name="Geertsma E.R."/>
            <person name="Duurkens R.H."/>
            <person name="Poolman B."/>
            <person name="van Sinderen D."/>
        </authorList>
    </citation>
    <scope>NUCLEOTIDE SEQUENCE [GENOMIC DNA]</scope>
    <scope>FUNCTION AS A TRANSPORTER</scope>
    <scope>ACTIVITY REGULATION</scope>
    <scope>INDUCTION</scope>
    <scope>DISRUPTION PHENOTYPE</scope>
    <source>
        <strain>NZ9000</strain>
    </source>
</reference>
<reference key="2">
    <citation type="journal article" date="2010" name="J. Bacteriol.">
        <title>Genome sequences of Lactococcus lactis MG1363 (revised) and NZ9000 and comparative physiological studies.</title>
        <authorList>
            <person name="Linares D.M."/>
            <person name="Kok J."/>
            <person name="Poolman B."/>
        </authorList>
    </citation>
    <scope>NUCLEOTIDE SEQUENCE [LARGE SCALE GENOMIC DNA]</scope>
    <source>
        <strain>NZ9000</strain>
    </source>
</reference>
<reference key="3">
    <citation type="journal article" date="2007" name="J. Biol. Chem.">
        <title>Flavin binding to the high affinity riboflavin transporter RibU.</title>
        <authorList>
            <person name="Duurkens R.H."/>
            <person name="Tol M.B."/>
            <person name="Geertsma E.R."/>
            <person name="Permentier H.P."/>
            <person name="Slotboom D.J."/>
        </authorList>
    </citation>
    <scope>SUBCELLULAR LOCATION</scope>
    <scope>DOMAIN</scope>
    <scope>RIBOFLAVIN-BINDING</scope>
    <scope>MUTAGENESIS OF TRP-68; TRP-79 AND TRP-97</scope>
    <source>
        <strain>NZ9000</strain>
    </source>
</reference>
<dbReference type="EMBL" id="AY994156">
    <property type="protein sequence ID" value="AAY43361.1"/>
    <property type="molecule type" value="Genomic_DNA"/>
</dbReference>
<dbReference type="EMBL" id="CP002094">
    <property type="protein sequence ID" value="ADJ60195.1"/>
    <property type="molecule type" value="Genomic_DNA"/>
</dbReference>
<dbReference type="RefSeq" id="WP_011835093.1">
    <property type="nucleotide sequence ID" value="NC_017949.1"/>
</dbReference>
<dbReference type="SMR" id="D8KIE9"/>
<dbReference type="KEGG" id="lln:LLNZ_06150"/>
<dbReference type="PATRIC" id="fig|746361.3.peg.1235"/>
<dbReference type="HOGENOM" id="CLU_086673_2_1_9"/>
<dbReference type="GO" id="GO:0005886">
    <property type="term" value="C:plasma membrane"/>
    <property type="evidence" value="ECO:0007669"/>
    <property type="project" value="UniProtKB-SubCell"/>
</dbReference>
<dbReference type="GO" id="GO:0032217">
    <property type="term" value="F:riboflavin transmembrane transporter activity"/>
    <property type="evidence" value="ECO:0007669"/>
    <property type="project" value="InterPro"/>
</dbReference>
<dbReference type="FunFam" id="1.10.1760.20:FF:000009">
    <property type="entry name" value="Riboflavin transporter"/>
    <property type="match status" value="1"/>
</dbReference>
<dbReference type="Gene3D" id="1.10.1760.20">
    <property type="match status" value="1"/>
</dbReference>
<dbReference type="InterPro" id="IPR024529">
    <property type="entry name" value="ECF_trnsprt_substrate-spec"/>
</dbReference>
<dbReference type="InterPro" id="IPR025720">
    <property type="entry name" value="RibU"/>
</dbReference>
<dbReference type="PANTHER" id="PTHR38438">
    <property type="entry name" value="RIBOFLAVIN TRANSPORTER RIBU"/>
    <property type="match status" value="1"/>
</dbReference>
<dbReference type="PANTHER" id="PTHR38438:SF1">
    <property type="entry name" value="RIBOFLAVIN TRANSPORTER RIBU"/>
    <property type="match status" value="1"/>
</dbReference>
<dbReference type="Pfam" id="PF12822">
    <property type="entry name" value="ECF_trnsprt"/>
    <property type="match status" value="1"/>
</dbReference>
<dbReference type="PIRSF" id="PIRSF037778">
    <property type="entry name" value="UCP037778_transp_RibU"/>
    <property type="match status" value="1"/>
</dbReference>
<sequence length="206" mass="22972">MSKTRRMVLIAMLAALSTILLLPILQFPLLPGIDFMKVELSIIPVLIGVFTLGLGDGFIILFIRSVLWYLLFNQGPSTWIGVPMNFVALGIFMAIVWFFTKKKFSIKNYTVGIVLATIASVLVMMVLNVFYALPLYRLAAGFDVDKIFAGATHLFNMGSLSVTLNPTYLLTVVLPFNALQYIIFALVFGLIVTVFKKNKVVKFYNA</sequence>
<proteinExistence type="evidence at protein level"/>
<feature type="chain" id="PRO_0000402187" description="Riboflavin transporter RibU">
    <location>
        <begin position="1"/>
        <end position="206"/>
    </location>
</feature>
<feature type="transmembrane region" description="Helical" evidence="2">
    <location>
        <begin position="7"/>
        <end position="27"/>
    </location>
</feature>
<feature type="transmembrane region" description="Helical" evidence="2">
    <location>
        <begin position="42"/>
        <end position="62"/>
    </location>
</feature>
<feature type="transmembrane region" description="Helical" evidence="2">
    <location>
        <begin position="79"/>
        <end position="99"/>
    </location>
</feature>
<feature type="transmembrane region" description="Helical" evidence="2">
    <location>
        <begin position="113"/>
        <end position="133"/>
    </location>
</feature>
<feature type="transmembrane region" description="Helical" evidence="2">
    <location>
        <begin position="147"/>
        <end position="169"/>
    </location>
</feature>
<feature type="transmembrane region" description="Helical" evidence="2">
    <location>
        <begin position="173"/>
        <end position="195"/>
    </location>
</feature>
<feature type="mutagenesis site" description="Strong increase of the riboflavin dissociation constant." evidence="4">
    <original>W</original>
    <variation>Y</variation>
    <location>
        <position position="68"/>
    </location>
</feature>
<feature type="mutagenesis site" description="No change in riboflavin binding." evidence="4">
    <original>W</original>
    <variation>Y</variation>
    <location>
        <position position="79"/>
    </location>
</feature>
<feature type="mutagenesis site" description="No change in riboflavin binding." evidence="4">
    <original>W</original>
    <variation>Y</variation>
    <location>
        <position position="97"/>
    </location>
</feature>
<evidence type="ECO:0000250" key="1"/>
<evidence type="ECO:0000255" key="2"/>
<evidence type="ECO:0000269" key="3">
    <source>
    </source>
</evidence>
<evidence type="ECO:0000269" key="4">
    <source>
    </source>
</evidence>
<evidence type="ECO:0000305" key="5"/>
<organism>
    <name type="scientific">Lactococcus lactis subsp. cremoris (strain NZ9000)</name>
    <dbReference type="NCBI Taxonomy" id="746361"/>
    <lineage>
        <taxon>Bacteria</taxon>
        <taxon>Bacillati</taxon>
        <taxon>Bacillota</taxon>
        <taxon>Bacilli</taxon>
        <taxon>Lactobacillales</taxon>
        <taxon>Streptococcaceae</taxon>
        <taxon>Lactococcus</taxon>
        <taxon>Lactococcus cremoris subsp. cremoris</taxon>
    </lineage>
</organism>
<comment type="function">
    <text evidence="1 3">Probably a riboflavin-binding protein that interacts with the energy-coupling factor (ECF) ABC-transporter complex. Unlike classic ABC transporters this ECF transporter provides the energy necessary to transport a number of different substrates. The substrates themselves are bound by transmembrane, not extracytoplasmic soluble proteins (By similarity). Mediates riboflavin uptake, probably also transports FMN and roseoflavin.</text>
</comment>
<comment type="activity regulation">
    <text evidence="3">Inhibited by FMN and roseoflavin.</text>
</comment>
<comment type="subunit">
    <text evidence="1">Forms a stable energy-coupling factor (ECF) transporter complex composed of a membrane-embedded substrate-binding protein (S component), 2 ATP-binding proteins (A component) and 2 transmembrane proteins (T component). May be able to interact with more than 1 S component at a time (By similarity).</text>
</comment>
<comment type="subcellular location">
    <subcellularLocation>
        <location evidence="4">Cell membrane</location>
        <topology evidence="4">Multi-pass membrane protein</topology>
    </subcellularLocation>
</comment>
<comment type="induction">
    <text evidence="3">Induced by riboflavin deficiency.</text>
</comment>
<comment type="domain">
    <text evidence="4">Riboflavin is stacked with one or more Trp residues in the binding pocket of RibU.</text>
</comment>
<comment type="disruption phenotype">
    <text evidence="3">Mutant exhibits altered transcriptional control of the riboflavin biosynthesis operon in response to riboflavin and FMN, and does not consume riboflavin from the growth medium.</text>
</comment>
<comment type="miscellaneous">
    <text>Riboflavin, FMN and roseoflavin, but not FAD, bind to RibU with high affinity and 1:1 stoichiometry.</text>
</comment>
<comment type="similarity">
    <text evidence="5">Belongs to the prokaryotic riboflavin transporter (P-RFT) (TC 2.A.87) family.</text>
</comment>
<protein>
    <recommendedName>
        <fullName>Riboflavin transporter RibU</fullName>
    </recommendedName>
    <alternativeName>
        <fullName>Riboflavin ECF transporter S component RibU</fullName>
    </alternativeName>
</protein>
<name>RIBU_LACLN</name>
<accession>D8KIE9</accession>
<accession>A2RKH8</accession>
<accession>Q1RN04</accession>
<gene>
    <name type="primary">ribU</name>
    <name type="ordered locus">LLNZ_06150</name>
</gene>
<keyword id="KW-1003">Cell membrane</keyword>
<keyword id="KW-0472">Membrane</keyword>
<keyword id="KW-0812">Transmembrane</keyword>
<keyword id="KW-1133">Transmembrane helix</keyword>
<keyword id="KW-0813">Transport</keyword>